<comment type="function">
    <text evidence="1">Potential calcium sensor.</text>
</comment>
<comment type="alternative products">
    <event type="alternative splicing"/>
    <isoform>
        <id>Q52K82-1</id>
        <name>1</name>
        <sequence type="displayed"/>
    </isoform>
    <isoform>
        <id>Q52K82-2</id>
        <name>2</name>
        <sequence type="described" ref="VSP_034552 VSP_034553"/>
    </isoform>
</comment>
<comment type="caution">
    <text evidence="4">Although assigned as a calmodulin family member by Ref.5, it only contains EF-hand domains.</text>
</comment>
<comment type="sequence caution" evidence="4">
    <conflict type="erroneous gene model prediction">
        <sequence resource="EMBL-CDS" id="CAA18223"/>
    </conflict>
</comment>
<comment type="sequence caution" evidence="4">
    <conflict type="erroneous gene model prediction">
        <sequence resource="EMBL-CDS" id="CAB79502"/>
    </conflict>
</comment>
<feature type="chain" id="PRO_0000342950" description="Probable calcium-binding protein CML21">
    <location>
        <begin position="1"/>
        <end position="231"/>
    </location>
</feature>
<feature type="domain" description="EF-hand 1" evidence="2">
    <location>
        <begin position="54"/>
        <end position="89"/>
    </location>
</feature>
<feature type="domain" description="EF-hand 2" evidence="2">
    <location>
        <begin position="90"/>
        <end position="125"/>
    </location>
</feature>
<feature type="domain" description="EF-hand 3" evidence="2">
    <location>
        <begin position="145"/>
        <end position="180"/>
    </location>
</feature>
<feature type="domain" description="EF-hand 4" evidence="2">
    <location>
        <begin position="181"/>
        <end position="216"/>
    </location>
</feature>
<feature type="binding site" evidence="2">
    <location>
        <position position="67"/>
    </location>
    <ligand>
        <name>Ca(2+)</name>
        <dbReference type="ChEBI" id="CHEBI:29108"/>
        <label>1</label>
    </ligand>
</feature>
<feature type="binding site" evidence="2">
    <location>
        <position position="69"/>
    </location>
    <ligand>
        <name>Ca(2+)</name>
        <dbReference type="ChEBI" id="CHEBI:29108"/>
        <label>1</label>
    </ligand>
</feature>
<feature type="binding site" evidence="2">
    <location>
        <position position="71"/>
    </location>
    <ligand>
        <name>Ca(2+)</name>
        <dbReference type="ChEBI" id="CHEBI:29108"/>
        <label>1</label>
    </ligand>
</feature>
<feature type="binding site" evidence="2">
    <location>
        <position position="73"/>
    </location>
    <ligand>
        <name>Ca(2+)</name>
        <dbReference type="ChEBI" id="CHEBI:29108"/>
        <label>1</label>
    </ligand>
</feature>
<feature type="binding site" evidence="2">
    <location>
        <position position="78"/>
    </location>
    <ligand>
        <name>Ca(2+)</name>
        <dbReference type="ChEBI" id="CHEBI:29108"/>
        <label>1</label>
    </ligand>
</feature>
<feature type="binding site" evidence="2">
    <location>
        <position position="158"/>
    </location>
    <ligand>
        <name>Ca(2+)</name>
        <dbReference type="ChEBI" id="CHEBI:29108"/>
        <label>2</label>
    </ligand>
</feature>
<feature type="binding site" evidence="2">
    <location>
        <position position="160"/>
    </location>
    <ligand>
        <name>Ca(2+)</name>
        <dbReference type="ChEBI" id="CHEBI:29108"/>
        <label>2</label>
    </ligand>
</feature>
<feature type="binding site" evidence="2">
    <location>
        <position position="162"/>
    </location>
    <ligand>
        <name>Ca(2+)</name>
        <dbReference type="ChEBI" id="CHEBI:29108"/>
        <label>2</label>
    </ligand>
</feature>
<feature type="binding site" evidence="2">
    <location>
        <position position="164"/>
    </location>
    <ligand>
        <name>Ca(2+)</name>
        <dbReference type="ChEBI" id="CHEBI:29108"/>
        <label>2</label>
    </ligand>
</feature>
<feature type="binding site" evidence="2">
    <location>
        <position position="169"/>
    </location>
    <ligand>
        <name>Ca(2+)</name>
        <dbReference type="ChEBI" id="CHEBI:29108"/>
        <label>2</label>
    </ligand>
</feature>
<feature type="binding site" evidence="4">
    <location>
        <position position="194"/>
    </location>
    <ligand>
        <name>Ca(2+)</name>
        <dbReference type="ChEBI" id="CHEBI:29108"/>
        <label>3</label>
    </ligand>
</feature>
<feature type="binding site" evidence="4">
    <location>
        <position position="196"/>
    </location>
    <ligand>
        <name>Ca(2+)</name>
        <dbReference type="ChEBI" id="CHEBI:29108"/>
        <label>3</label>
    </ligand>
</feature>
<feature type="binding site" evidence="4">
    <location>
        <position position="198"/>
    </location>
    <ligand>
        <name>Ca(2+)</name>
        <dbReference type="ChEBI" id="CHEBI:29108"/>
        <label>3</label>
    </ligand>
</feature>
<feature type="binding site" evidence="4">
    <location>
        <position position="200"/>
    </location>
    <ligand>
        <name>Ca(2+)</name>
        <dbReference type="ChEBI" id="CHEBI:29108"/>
        <label>3</label>
    </ligand>
</feature>
<feature type="binding site" evidence="4">
    <location>
        <position position="205"/>
    </location>
    <ligand>
        <name>Ca(2+)</name>
        <dbReference type="ChEBI" id="CHEBI:29108"/>
        <label>3</label>
    </ligand>
</feature>
<feature type="splice variant" id="VSP_034552" description="In isoform 2." evidence="3">
    <original>EEMDWDKNGMVNFKEFLFAFT</original>
    <variation>GLFLNSLPLLLKLSSSLNQEY</variation>
    <location>
        <begin position="191"/>
        <end position="211"/>
    </location>
</feature>
<feature type="splice variant" id="VSP_034553" description="In isoform 2." evidence="3">
    <location>
        <begin position="212"/>
        <end position="231"/>
    </location>
</feature>
<reference key="1">
    <citation type="journal article" date="1999" name="Nature">
        <title>Sequence and analysis of chromosome 4 of the plant Arabidopsis thaliana.</title>
        <authorList>
            <person name="Mayer K.F.X."/>
            <person name="Schueller C."/>
            <person name="Wambutt R."/>
            <person name="Murphy G."/>
            <person name="Volckaert G."/>
            <person name="Pohl T."/>
            <person name="Duesterhoeft A."/>
            <person name="Stiekema W."/>
            <person name="Entian K.-D."/>
            <person name="Terryn N."/>
            <person name="Harris B."/>
            <person name="Ansorge W."/>
            <person name="Brandt P."/>
            <person name="Grivell L.A."/>
            <person name="Rieger M."/>
            <person name="Weichselgartner M."/>
            <person name="de Simone V."/>
            <person name="Obermaier B."/>
            <person name="Mache R."/>
            <person name="Mueller M."/>
            <person name="Kreis M."/>
            <person name="Delseny M."/>
            <person name="Puigdomenech P."/>
            <person name="Watson M."/>
            <person name="Schmidtheini T."/>
            <person name="Reichert B."/>
            <person name="Portetelle D."/>
            <person name="Perez-Alonso M."/>
            <person name="Boutry M."/>
            <person name="Bancroft I."/>
            <person name="Vos P."/>
            <person name="Hoheisel J."/>
            <person name="Zimmermann W."/>
            <person name="Wedler H."/>
            <person name="Ridley P."/>
            <person name="Langham S.-A."/>
            <person name="McCullagh B."/>
            <person name="Bilham L."/>
            <person name="Robben J."/>
            <person name="van der Schueren J."/>
            <person name="Grymonprez B."/>
            <person name="Chuang Y.-J."/>
            <person name="Vandenbussche F."/>
            <person name="Braeken M."/>
            <person name="Weltjens I."/>
            <person name="Voet M."/>
            <person name="Bastiaens I."/>
            <person name="Aert R."/>
            <person name="Defoor E."/>
            <person name="Weitzenegger T."/>
            <person name="Bothe G."/>
            <person name="Ramsperger U."/>
            <person name="Hilbert H."/>
            <person name="Braun M."/>
            <person name="Holzer E."/>
            <person name="Brandt A."/>
            <person name="Peters S."/>
            <person name="van Staveren M."/>
            <person name="Dirkse W."/>
            <person name="Mooijman P."/>
            <person name="Klein Lankhorst R."/>
            <person name="Rose M."/>
            <person name="Hauf J."/>
            <person name="Koetter P."/>
            <person name="Berneiser S."/>
            <person name="Hempel S."/>
            <person name="Feldpausch M."/>
            <person name="Lamberth S."/>
            <person name="Van den Daele H."/>
            <person name="De Keyser A."/>
            <person name="Buysshaert C."/>
            <person name="Gielen J."/>
            <person name="Villarroel R."/>
            <person name="De Clercq R."/>
            <person name="van Montagu M."/>
            <person name="Rogers J."/>
            <person name="Cronin A."/>
            <person name="Quail M.A."/>
            <person name="Bray-Allen S."/>
            <person name="Clark L."/>
            <person name="Doggett J."/>
            <person name="Hall S."/>
            <person name="Kay M."/>
            <person name="Lennard N."/>
            <person name="McLay K."/>
            <person name="Mayes R."/>
            <person name="Pettett A."/>
            <person name="Rajandream M.A."/>
            <person name="Lyne M."/>
            <person name="Benes V."/>
            <person name="Rechmann S."/>
            <person name="Borkova D."/>
            <person name="Bloecker H."/>
            <person name="Scharfe M."/>
            <person name="Grimm M."/>
            <person name="Loehnert T.-H."/>
            <person name="Dose S."/>
            <person name="de Haan M."/>
            <person name="Maarse A.C."/>
            <person name="Schaefer M."/>
            <person name="Mueller-Auer S."/>
            <person name="Gabel C."/>
            <person name="Fuchs M."/>
            <person name="Fartmann B."/>
            <person name="Granderath K."/>
            <person name="Dauner D."/>
            <person name="Herzl A."/>
            <person name="Neumann S."/>
            <person name="Argiriou A."/>
            <person name="Vitale D."/>
            <person name="Liguori R."/>
            <person name="Piravandi E."/>
            <person name="Massenet O."/>
            <person name="Quigley F."/>
            <person name="Clabauld G."/>
            <person name="Muendlein A."/>
            <person name="Felber R."/>
            <person name="Schnabl S."/>
            <person name="Hiller R."/>
            <person name="Schmidt W."/>
            <person name="Lecharny A."/>
            <person name="Aubourg S."/>
            <person name="Chefdor F."/>
            <person name="Cooke R."/>
            <person name="Berger C."/>
            <person name="Monfort A."/>
            <person name="Casacuberta E."/>
            <person name="Gibbons T."/>
            <person name="Weber N."/>
            <person name="Vandenbol M."/>
            <person name="Bargues M."/>
            <person name="Terol J."/>
            <person name="Torres A."/>
            <person name="Perez-Perez A."/>
            <person name="Purnelle B."/>
            <person name="Bent E."/>
            <person name="Johnson S."/>
            <person name="Tacon D."/>
            <person name="Jesse T."/>
            <person name="Heijnen L."/>
            <person name="Schwarz S."/>
            <person name="Scholler P."/>
            <person name="Heber S."/>
            <person name="Francs P."/>
            <person name="Bielke C."/>
            <person name="Frishman D."/>
            <person name="Haase D."/>
            <person name="Lemcke K."/>
            <person name="Mewes H.-W."/>
            <person name="Stocker S."/>
            <person name="Zaccaria P."/>
            <person name="Bevan M."/>
            <person name="Wilson R.K."/>
            <person name="de la Bastide M."/>
            <person name="Habermann K."/>
            <person name="Parnell L."/>
            <person name="Dedhia N."/>
            <person name="Gnoj L."/>
            <person name="Schutz K."/>
            <person name="Huang E."/>
            <person name="Spiegel L."/>
            <person name="Sekhon M."/>
            <person name="Murray J."/>
            <person name="Sheet P."/>
            <person name="Cordes M."/>
            <person name="Abu-Threideh J."/>
            <person name="Stoneking T."/>
            <person name="Kalicki J."/>
            <person name="Graves T."/>
            <person name="Harmon G."/>
            <person name="Edwards J."/>
            <person name="Latreille P."/>
            <person name="Courtney L."/>
            <person name="Cloud J."/>
            <person name="Abbott A."/>
            <person name="Scott K."/>
            <person name="Johnson D."/>
            <person name="Minx P."/>
            <person name="Bentley D."/>
            <person name="Fulton B."/>
            <person name="Miller N."/>
            <person name="Greco T."/>
            <person name="Kemp K."/>
            <person name="Kramer J."/>
            <person name="Fulton L."/>
            <person name="Mardis E."/>
            <person name="Dante M."/>
            <person name="Pepin K."/>
            <person name="Hillier L.W."/>
            <person name="Nelson J."/>
            <person name="Spieth J."/>
            <person name="Ryan E."/>
            <person name="Andrews S."/>
            <person name="Geisel C."/>
            <person name="Layman D."/>
            <person name="Du H."/>
            <person name="Ali J."/>
            <person name="Berghoff A."/>
            <person name="Jones K."/>
            <person name="Drone K."/>
            <person name="Cotton M."/>
            <person name="Joshu C."/>
            <person name="Antonoiu B."/>
            <person name="Zidanic M."/>
            <person name="Strong C."/>
            <person name="Sun H."/>
            <person name="Lamar B."/>
            <person name="Yordan C."/>
            <person name="Ma P."/>
            <person name="Zhong J."/>
            <person name="Preston R."/>
            <person name="Vil D."/>
            <person name="Shekher M."/>
            <person name="Matero A."/>
            <person name="Shah R."/>
            <person name="Swaby I.K."/>
            <person name="O'Shaughnessy A."/>
            <person name="Rodriguez M."/>
            <person name="Hoffman J."/>
            <person name="Till S."/>
            <person name="Granat S."/>
            <person name="Shohdy N."/>
            <person name="Hasegawa A."/>
            <person name="Hameed A."/>
            <person name="Lodhi M."/>
            <person name="Johnson A."/>
            <person name="Chen E."/>
            <person name="Marra M.A."/>
            <person name="Martienssen R."/>
            <person name="McCombie W.R."/>
        </authorList>
    </citation>
    <scope>NUCLEOTIDE SEQUENCE [LARGE SCALE GENOMIC DNA]</scope>
    <source>
        <strain>cv. Columbia</strain>
    </source>
</reference>
<reference key="2">
    <citation type="journal article" date="2017" name="Plant J.">
        <title>Araport11: a complete reannotation of the Arabidopsis thaliana reference genome.</title>
        <authorList>
            <person name="Cheng C.Y."/>
            <person name="Krishnakumar V."/>
            <person name="Chan A.P."/>
            <person name="Thibaud-Nissen F."/>
            <person name="Schobel S."/>
            <person name="Town C.D."/>
        </authorList>
    </citation>
    <scope>GENOME REANNOTATION</scope>
    <source>
        <strain>cv. Columbia</strain>
    </source>
</reference>
<reference key="3">
    <citation type="submission" date="2005-04" db="EMBL/GenBank/DDBJ databases">
        <title>Arabidopsis cDNA clones.</title>
        <authorList>
            <person name="Shinn P."/>
            <person name="Chen H."/>
            <person name="Cheuk R.F."/>
            <person name="Kim C.J."/>
            <person name="Ecker J.R."/>
        </authorList>
    </citation>
    <scope>NUCLEOTIDE SEQUENCE [LARGE SCALE MRNA] (ISOFORM 1)</scope>
    <source>
        <strain>cv. Columbia</strain>
    </source>
</reference>
<reference key="4">
    <citation type="submission" date="2006-07" db="EMBL/GenBank/DDBJ databases">
        <title>Large-scale analysis of RIKEN Arabidopsis full-length (RAFL) cDNAs.</title>
        <authorList>
            <person name="Totoki Y."/>
            <person name="Seki M."/>
            <person name="Ishida J."/>
            <person name="Nakajima M."/>
            <person name="Enju A."/>
            <person name="Kamiya A."/>
            <person name="Narusaka M."/>
            <person name="Shin-i T."/>
            <person name="Nakagawa M."/>
            <person name="Sakamoto N."/>
            <person name="Oishi K."/>
            <person name="Kohara Y."/>
            <person name="Kobayashi M."/>
            <person name="Toyoda A."/>
            <person name="Sakaki Y."/>
            <person name="Sakurai T."/>
            <person name="Iida K."/>
            <person name="Akiyama K."/>
            <person name="Satou M."/>
            <person name="Toyoda T."/>
            <person name="Konagaya A."/>
            <person name="Carninci P."/>
            <person name="Kawai J."/>
            <person name="Hayashizaki Y."/>
            <person name="Shinozaki K."/>
        </authorList>
    </citation>
    <scope>NUCLEOTIDE SEQUENCE [LARGE SCALE MRNA] (ISOFORM 2)</scope>
    <source>
        <strain>cv. Columbia</strain>
    </source>
</reference>
<reference key="5">
    <citation type="journal article" date="2003" name="New Phytol.">
        <title>Calmodulins and related potential calcium sensors of Arabidopsis.</title>
        <authorList>
            <person name="McCormack E."/>
            <person name="Braam J."/>
        </authorList>
    </citation>
    <scope>GENE FAMILY</scope>
    <scope>NOMENCLATURE</scope>
</reference>
<proteinExistence type="evidence at transcript level"/>
<sequence length="231" mass="26770">MGGAVTKSETLQKEWVPETKLEAKIIEAVQRRASRGTTMKSFNSIVLKFPKIDDGLRNCKAIFQEFDEDSNGSIDHTELKNCIRKLEISFDEEEINDLFKACDINEDMGITFTEFIVLLCLVYLLKDDSSTLQKKWTMGMPKLEPTFETLVDTFVFLDENKDGYVSREEMVRAIDESGERSSGRIAMKRFEEMDWDKNGMVNFKEFLFAFTQWVGIDENEEEEEEDNNEKA</sequence>
<name>CML21_ARATH</name>
<organism>
    <name type="scientific">Arabidopsis thaliana</name>
    <name type="common">Mouse-ear cress</name>
    <dbReference type="NCBI Taxonomy" id="3702"/>
    <lineage>
        <taxon>Eukaryota</taxon>
        <taxon>Viridiplantae</taxon>
        <taxon>Streptophyta</taxon>
        <taxon>Embryophyta</taxon>
        <taxon>Tracheophyta</taxon>
        <taxon>Spermatophyta</taxon>
        <taxon>Magnoliopsida</taxon>
        <taxon>eudicotyledons</taxon>
        <taxon>Gunneridae</taxon>
        <taxon>Pentapetalae</taxon>
        <taxon>rosids</taxon>
        <taxon>malvids</taxon>
        <taxon>Brassicales</taxon>
        <taxon>Brassicaceae</taxon>
        <taxon>Camelineae</taxon>
        <taxon>Arabidopsis</taxon>
    </lineage>
</organism>
<evidence type="ECO:0000250" key="1"/>
<evidence type="ECO:0000255" key="2">
    <source>
        <dbReference type="PROSITE-ProRule" id="PRU00448"/>
    </source>
</evidence>
<evidence type="ECO:0000303" key="3">
    <source ref="4"/>
</evidence>
<evidence type="ECO:0000305" key="4"/>
<protein>
    <recommendedName>
        <fullName>Probable calcium-binding protein CML21</fullName>
    </recommendedName>
    <alternativeName>
        <fullName>Calmodulin-like protein 21</fullName>
    </alternativeName>
</protein>
<keyword id="KW-0025">Alternative splicing</keyword>
<keyword id="KW-0106">Calcium</keyword>
<keyword id="KW-0479">Metal-binding</keyword>
<keyword id="KW-1185">Reference proteome</keyword>
<keyword id="KW-0677">Repeat</keyword>
<accession>Q52K82</accession>
<accession>O65587</accession>
<accession>Q0WSM7</accession>
<gene>
    <name type="primary">CML21</name>
    <name type="ordered locus">At4g26470</name>
    <name type="ORF">M3E9.100</name>
</gene>
<dbReference type="EMBL" id="AL022223">
    <property type="protein sequence ID" value="CAA18223.1"/>
    <property type="status" value="ALT_SEQ"/>
    <property type="molecule type" value="Genomic_DNA"/>
</dbReference>
<dbReference type="EMBL" id="AL161565">
    <property type="protein sequence ID" value="CAB79502.1"/>
    <property type="status" value="ALT_SEQ"/>
    <property type="molecule type" value="Genomic_DNA"/>
</dbReference>
<dbReference type="EMBL" id="CP002687">
    <property type="protein sequence ID" value="AEE85204.1"/>
    <property type="molecule type" value="Genomic_DNA"/>
</dbReference>
<dbReference type="EMBL" id="CP002687">
    <property type="protein sequence ID" value="AEE85205.1"/>
    <property type="molecule type" value="Genomic_DNA"/>
</dbReference>
<dbReference type="EMBL" id="BT021986">
    <property type="protein sequence ID" value="AAY17423.1"/>
    <property type="molecule type" value="mRNA"/>
</dbReference>
<dbReference type="EMBL" id="AK227901">
    <property type="protein sequence ID" value="BAE99871.1"/>
    <property type="molecule type" value="mRNA"/>
</dbReference>
<dbReference type="PIR" id="T05057">
    <property type="entry name" value="T05057"/>
</dbReference>
<dbReference type="RefSeq" id="NP_001078450.1">
    <molecule id="Q52K82-2"/>
    <property type="nucleotide sequence ID" value="NM_001084981.2"/>
</dbReference>
<dbReference type="RefSeq" id="NP_194377.2">
    <molecule id="Q52K82-1"/>
    <property type="nucleotide sequence ID" value="NM_118780.4"/>
</dbReference>
<dbReference type="SMR" id="Q52K82"/>
<dbReference type="FunCoup" id="Q52K82">
    <property type="interactions" value="204"/>
</dbReference>
<dbReference type="STRING" id="3702.Q52K82"/>
<dbReference type="PaxDb" id="3702-AT4G26470.1"/>
<dbReference type="ProteomicsDB" id="241046">
    <molecule id="Q52K82-1"/>
</dbReference>
<dbReference type="EnsemblPlants" id="AT4G26470.1">
    <molecule id="Q52K82-1"/>
    <property type="protein sequence ID" value="AT4G26470.1"/>
    <property type="gene ID" value="AT4G26470"/>
</dbReference>
<dbReference type="EnsemblPlants" id="AT4G26470.2">
    <molecule id="Q52K82-2"/>
    <property type="protein sequence ID" value="AT4G26470.2"/>
    <property type="gene ID" value="AT4G26470"/>
</dbReference>
<dbReference type="GeneID" id="828753"/>
<dbReference type="Gramene" id="AT4G26470.1">
    <molecule id="Q52K82-1"/>
    <property type="protein sequence ID" value="AT4G26470.1"/>
    <property type="gene ID" value="AT4G26470"/>
</dbReference>
<dbReference type="Gramene" id="AT4G26470.2">
    <molecule id="Q52K82-2"/>
    <property type="protein sequence ID" value="AT4G26470.2"/>
    <property type="gene ID" value="AT4G26470"/>
</dbReference>
<dbReference type="KEGG" id="ath:AT4G26470"/>
<dbReference type="Araport" id="AT4G26470"/>
<dbReference type="TAIR" id="AT4G26470"/>
<dbReference type="eggNOG" id="KOG0027">
    <property type="taxonomic scope" value="Eukaryota"/>
</dbReference>
<dbReference type="HOGENOM" id="CLU_069274_1_1_1"/>
<dbReference type="InParanoid" id="Q52K82"/>
<dbReference type="OrthoDB" id="26525at2759"/>
<dbReference type="PhylomeDB" id="Q52K82"/>
<dbReference type="PRO" id="PR:Q52K82"/>
<dbReference type="Proteomes" id="UP000006548">
    <property type="component" value="Chromosome 4"/>
</dbReference>
<dbReference type="ExpressionAtlas" id="Q52K82">
    <property type="expression patterns" value="baseline and differential"/>
</dbReference>
<dbReference type="GO" id="GO:0005737">
    <property type="term" value="C:cytoplasm"/>
    <property type="evidence" value="ECO:0000314"/>
    <property type="project" value="TAIR"/>
</dbReference>
<dbReference type="GO" id="GO:0005509">
    <property type="term" value="F:calcium ion binding"/>
    <property type="evidence" value="ECO:0007669"/>
    <property type="project" value="InterPro"/>
</dbReference>
<dbReference type="CDD" id="cd00051">
    <property type="entry name" value="EFh"/>
    <property type="match status" value="1"/>
</dbReference>
<dbReference type="FunFam" id="1.10.238.10:FF:000565">
    <property type="entry name" value="Calcium-binding EF-hand family protein"/>
    <property type="match status" value="1"/>
</dbReference>
<dbReference type="FunFam" id="1.10.238.10:FF:000566">
    <property type="entry name" value="Probable calcium-binding protein CML21"/>
    <property type="match status" value="1"/>
</dbReference>
<dbReference type="Gene3D" id="1.10.238.10">
    <property type="entry name" value="EF-hand"/>
    <property type="match status" value="2"/>
</dbReference>
<dbReference type="InterPro" id="IPR052591">
    <property type="entry name" value="CML21-like"/>
</dbReference>
<dbReference type="InterPro" id="IPR011992">
    <property type="entry name" value="EF-hand-dom_pair"/>
</dbReference>
<dbReference type="InterPro" id="IPR018247">
    <property type="entry name" value="EF_Hand_1_Ca_BS"/>
</dbReference>
<dbReference type="InterPro" id="IPR002048">
    <property type="entry name" value="EF_hand_dom"/>
</dbReference>
<dbReference type="PANTHER" id="PTHR23064">
    <property type="entry name" value="TROPONIN"/>
    <property type="match status" value="1"/>
</dbReference>
<dbReference type="Pfam" id="PF13499">
    <property type="entry name" value="EF-hand_7"/>
    <property type="match status" value="2"/>
</dbReference>
<dbReference type="SMART" id="SM00054">
    <property type="entry name" value="EFh"/>
    <property type="match status" value="4"/>
</dbReference>
<dbReference type="SUPFAM" id="SSF47473">
    <property type="entry name" value="EF-hand"/>
    <property type="match status" value="1"/>
</dbReference>
<dbReference type="PROSITE" id="PS00018">
    <property type="entry name" value="EF_HAND_1"/>
    <property type="match status" value="2"/>
</dbReference>
<dbReference type="PROSITE" id="PS50222">
    <property type="entry name" value="EF_HAND_2"/>
    <property type="match status" value="4"/>
</dbReference>